<feature type="chain" id="PRO_1000205753" description="Small ribosomal subunit protein bS16">
    <location>
        <begin position="1"/>
        <end position="78"/>
    </location>
</feature>
<protein>
    <recommendedName>
        <fullName evidence="1">Small ribosomal subunit protein bS16</fullName>
    </recommendedName>
    <alternativeName>
        <fullName evidence="2">30S ribosomal protein S16</fullName>
    </alternativeName>
</protein>
<keyword id="KW-1185">Reference proteome</keyword>
<keyword id="KW-0687">Ribonucleoprotein</keyword>
<keyword id="KW-0689">Ribosomal protein</keyword>
<gene>
    <name evidence="1" type="primary">rpsP</name>
    <name type="ordered locus">Desal_0195</name>
</gene>
<name>RS16_MARSD</name>
<reference key="1">
    <citation type="submission" date="2009-06" db="EMBL/GenBank/DDBJ databases">
        <title>Complete sequence of Desulfovibrio salexigens DSM 2638.</title>
        <authorList>
            <consortium name="US DOE Joint Genome Institute"/>
            <person name="Lucas S."/>
            <person name="Copeland A."/>
            <person name="Lapidus A."/>
            <person name="Glavina del Rio T."/>
            <person name="Tice H."/>
            <person name="Bruce D."/>
            <person name="Goodwin L."/>
            <person name="Pitluck S."/>
            <person name="Munk A.C."/>
            <person name="Brettin T."/>
            <person name="Detter J.C."/>
            <person name="Han C."/>
            <person name="Tapia R."/>
            <person name="Larimer F."/>
            <person name="Land M."/>
            <person name="Hauser L."/>
            <person name="Kyrpides N."/>
            <person name="Anderson I."/>
            <person name="Wall J.D."/>
            <person name="Arkin A.P."/>
            <person name="Dehal P."/>
            <person name="Chivian D."/>
            <person name="Giles B."/>
            <person name="Hazen T.C."/>
        </authorList>
    </citation>
    <scope>NUCLEOTIDE SEQUENCE [LARGE SCALE GENOMIC DNA]</scope>
    <source>
        <strain>ATCC 14822 / DSM 2638 / NCIMB 8403 / VKM B-1763</strain>
    </source>
</reference>
<sequence length="78" mass="9058">MAIKLRLTRMGSKKRPFYRIVAINSETRRDGRPLDFCGYYNPMVEPVEVKIDKEKVEKWLERGAEPSDTVKSLLKANS</sequence>
<organism>
    <name type="scientific">Maridesulfovibrio salexigens (strain ATCC 14822 / DSM 2638 / NCIMB 8403 / VKM B-1763)</name>
    <name type="common">Desulfovibrio salexigens</name>
    <dbReference type="NCBI Taxonomy" id="526222"/>
    <lineage>
        <taxon>Bacteria</taxon>
        <taxon>Pseudomonadati</taxon>
        <taxon>Thermodesulfobacteriota</taxon>
        <taxon>Desulfovibrionia</taxon>
        <taxon>Desulfovibrionales</taxon>
        <taxon>Desulfovibrionaceae</taxon>
        <taxon>Maridesulfovibrio</taxon>
    </lineage>
</organism>
<comment type="similarity">
    <text evidence="1">Belongs to the bacterial ribosomal protein bS16 family.</text>
</comment>
<accession>C6BVQ1</accession>
<proteinExistence type="inferred from homology"/>
<dbReference type="EMBL" id="CP001649">
    <property type="protein sequence ID" value="ACS78265.1"/>
    <property type="molecule type" value="Genomic_DNA"/>
</dbReference>
<dbReference type="RefSeq" id="WP_012765791.1">
    <property type="nucleotide sequence ID" value="NC_012881.1"/>
</dbReference>
<dbReference type="SMR" id="C6BVQ1"/>
<dbReference type="STRING" id="526222.Desal_0195"/>
<dbReference type="KEGG" id="dsa:Desal_0195"/>
<dbReference type="eggNOG" id="COG0228">
    <property type="taxonomic scope" value="Bacteria"/>
</dbReference>
<dbReference type="HOGENOM" id="CLU_100590_5_0_7"/>
<dbReference type="OrthoDB" id="9807878at2"/>
<dbReference type="Proteomes" id="UP000002601">
    <property type="component" value="Chromosome"/>
</dbReference>
<dbReference type="GO" id="GO:0005737">
    <property type="term" value="C:cytoplasm"/>
    <property type="evidence" value="ECO:0007669"/>
    <property type="project" value="UniProtKB-ARBA"/>
</dbReference>
<dbReference type="GO" id="GO:0015935">
    <property type="term" value="C:small ribosomal subunit"/>
    <property type="evidence" value="ECO:0007669"/>
    <property type="project" value="TreeGrafter"/>
</dbReference>
<dbReference type="GO" id="GO:0003735">
    <property type="term" value="F:structural constituent of ribosome"/>
    <property type="evidence" value="ECO:0007669"/>
    <property type="project" value="InterPro"/>
</dbReference>
<dbReference type="GO" id="GO:0006412">
    <property type="term" value="P:translation"/>
    <property type="evidence" value="ECO:0007669"/>
    <property type="project" value="UniProtKB-UniRule"/>
</dbReference>
<dbReference type="Gene3D" id="3.30.1320.10">
    <property type="match status" value="1"/>
</dbReference>
<dbReference type="HAMAP" id="MF_00385">
    <property type="entry name" value="Ribosomal_bS16"/>
    <property type="match status" value="1"/>
</dbReference>
<dbReference type="InterPro" id="IPR000307">
    <property type="entry name" value="Ribosomal_bS16"/>
</dbReference>
<dbReference type="InterPro" id="IPR023803">
    <property type="entry name" value="Ribosomal_bS16_dom_sf"/>
</dbReference>
<dbReference type="NCBIfam" id="TIGR00002">
    <property type="entry name" value="S16"/>
    <property type="match status" value="1"/>
</dbReference>
<dbReference type="PANTHER" id="PTHR12919">
    <property type="entry name" value="30S RIBOSOMAL PROTEIN S16"/>
    <property type="match status" value="1"/>
</dbReference>
<dbReference type="PANTHER" id="PTHR12919:SF20">
    <property type="entry name" value="SMALL RIBOSOMAL SUBUNIT PROTEIN BS16M"/>
    <property type="match status" value="1"/>
</dbReference>
<dbReference type="Pfam" id="PF00886">
    <property type="entry name" value="Ribosomal_S16"/>
    <property type="match status" value="1"/>
</dbReference>
<dbReference type="SUPFAM" id="SSF54565">
    <property type="entry name" value="Ribosomal protein S16"/>
    <property type="match status" value="1"/>
</dbReference>
<evidence type="ECO:0000255" key="1">
    <source>
        <dbReference type="HAMAP-Rule" id="MF_00385"/>
    </source>
</evidence>
<evidence type="ECO:0000305" key="2"/>